<evidence type="ECO:0000255" key="1">
    <source>
        <dbReference type="HAMAP-Rule" id="MF_00165"/>
    </source>
</evidence>
<name>KTHY_XYLFM</name>
<accession>B0U447</accession>
<keyword id="KW-0067">ATP-binding</keyword>
<keyword id="KW-0418">Kinase</keyword>
<keyword id="KW-0545">Nucleotide biosynthesis</keyword>
<keyword id="KW-0547">Nucleotide-binding</keyword>
<keyword id="KW-0808">Transferase</keyword>
<dbReference type="EC" id="2.7.4.9" evidence="1"/>
<dbReference type="EMBL" id="CP000941">
    <property type="protein sequence ID" value="ACA12626.1"/>
    <property type="molecule type" value="Genomic_DNA"/>
</dbReference>
<dbReference type="RefSeq" id="WP_004083536.1">
    <property type="nucleotide sequence ID" value="NC_010513.1"/>
</dbReference>
<dbReference type="SMR" id="B0U447"/>
<dbReference type="KEGG" id="xfm:Xfasm12_1726"/>
<dbReference type="HOGENOM" id="CLU_049131_0_2_6"/>
<dbReference type="GO" id="GO:0005829">
    <property type="term" value="C:cytosol"/>
    <property type="evidence" value="ECO:0007669"/>
    <property type="project" value="TreeGrafter"/>
</dbReference>
<dbReference type="GO" id="GO:0005524">
    <property type="term" value="F:ATP binding"/>
    <property type="evidence" value="ECO:0007669"/>
    <property type="project" value="UniProtKB-UniRule"/>
</dbReference>
<dbReference type="GO" id="GO:0004798">
    <property type="term" value="F:dTMP kinase activity"/>
    <property type="evidence" value="ECO:0007669"/>
    <property type="project" value="UniProtKB-UniRule"/>
</dbReference>
<dbReference type="GO" id="GO:0006233">
    <property type="term" value="P:dTDP biosynthetic process"/>
    <property type="evidence" value="ECO:0007669"/>
    <property type="project" value="InterPro"/>
</dbReference>
<dbReference type="GO" id="GO:0006235">
    <property type="term" value="P:dTTP biosynthetic process"/>
    <property type="evidence" value="ECO:0007669"/>
    <property type="project" value="UniProtKB-UniRule"/>
</dbReference>
<dbReference type="GO" id="GO:0006227">
    <property type="term" value="P:dUDP biosynthetic process"/>
    <property type="evidence" value="ECO:0007669"/>
    <property type="project" value="TreeGrafter"/>
</dbReference>
<dbReference type="CDD" id="cd01672">
    <property type="entry name" value="TMPK"/>
    <property type="match status" value="1"/>
</dbReference>
<dbReference type="Gene3D" id="3.40.50.300">
    <property type="entry name" value="P-loop containing nucleotide triphosphate hydrolases"/>
    <property type="match status" value="1"/>
</dbReference>
<dbReference type="HAMAP" id="MF_00165">
    <property type="entry name" value="Thymidylate_kinase"/>
    <property type="match status" value="1"/>
</dbReference>
<dbReference type="InterPro" id="IPR027417">
    <property type="entry name" value="P-loop_NTPase"/>
</dbReference>
<dbReference type="InterPro" id="IPR039430">
    <property type="entry name" value="Thymidylate_kin-like_dom"/>
</dbReference>
<dbReference type="InterPro" id="IPR018094">
    <property type="entry name" value="Thymidylate_kinase"/>
</dbReference>
<dbReference type="NCBIfam" id="TIGR00041">
    <property type="entry name" value="DTMP_kinase"/>
    <property type="match status" value="1"/>
</dbReference>
<dbReference type="PANTHER" id="PTHR10344">
    <property type="entry name" value="THYMIDYLATE KINASE"/>
    <property type="match status" value="1"/>
</dbReference>
<dbReference type="PANTHER" id="PTHR10344:SF4">
    <property type="entry name" value="UMP-CMP KINASE 2, MITOCHONDRIAL"/>
    <property type="match status" value="1"/>
</dbReference>
<dbReference type="Pfam" id="PF02223">
    <property type="entry name" value="Thymidylate_kin"/>
    <property type="match status" value="1"/>
</dbReference>
<dbReference type="SUPFAM" id="SSF52540">
    <property type="entry name" value="P-loop containing nucleoside triphosphate hydrolases"/>
    <property type="match status" value="1"/>
</dbReference>
<sequence length="217" mass="23394">MHDQIIPCGMLVAIEGIDGAGKTTLARSLALKLRGVGLETVVSKEPTNGPWGTLLRQSAATGRFSPEEEVDVLLRDRRQHVEDLIVPMIGRGAVVILDRYFPSMVAYQGAAGLPVDALLEANAFAPRPDVLLLLDVPPAIGLQRIWERGSTPNHFETTENLSRCRDIFLALELPSKRVIDATANAETVFSAALGLVMEVLRVRLGALGAVVLERLAG</sequence>
<proteinExistence type="inferred from homology"/>
<gene>
    <name evidence="1" type="primary">tmk</name>
    <name type="ordered locus">Xfasm12_1726</name>
</gene>
<organism>
    <name type="scientific">Xylella fastidiosa (strain M12)</name>
    <dbReference type="NCBI Taxonomy" id="405440"/>
    <lineage>
        <taxon>Bacteria</taxon>
        <taxon>Pseudomonadati</taxon>
        <taxon>Pseudomonadota</taxon>
        <taxon>Gammaproteobacteria</taxon>
        <taxon>Lysobacterales</taxon>
        <taxon>Lysobacteraceae</taxon>
        <taxon>Xylella</taxon>
    </lineage>
</organism>
<protein>
    <recommendedName>
        <fullName evidence="1">Thymidylate kinase</fullName>
        <ecNumber evidence="1">2.7.4.9</ecNumber>
    </recommendedName>
    <alternativeName>
        <fullName evidence="1">dTMP kinase</fullName>
    </alternativeName>
</protein>
<reference key="1">
    <citation type="journal article" date="2010" name="J. Bacteriol.">
        <title>Whole genome sequences of two Xylella fastidiosa strains (M12 and M23) causing almond leaf scorch disease in California.</title>
        <authorList>
            <person name="Chen J."/>
            <person name="Xie G."/>
            <person name="Han S."/>
            <person name="Chertkov O."/>
            <person name="Sims D."/>
            <person name="Civerolo E.L."/>
        </authorList>
    </citation>
    <scope>NUCLEOTIDE SEQUENCE [LARGE SCALE GENOMIC DNA]</scope>
    <source>
        <strain>M12</strain>
    </source>
</reference>
<feature type="chain" id="PRO_1000123602" description="Thymidylate kinase">
    <location>
        <begin position="1"/>
        <end position="217"/>
    </location>
</feature>
<feature type="binding site" evidence="1">
    <location>
        <begin position="16"/>
        <end position="23"/>
    </location>
    <ligand>
        <name>ATP</name>
        <dbReference type="ChEBI" id="CHEBI:30616"/>
    </ligand>
</feature>
<comment type="function">
    <text evidence="1">Phosphorylation of dTMP to form dTDP in both de novo and salvage pathways of dTTP synthesis.</text>
</comment>
<comment type="catalytic activity">
    <reaction evidence="1">
        <text>dTMP + ATP = dTDP + ADP</text>
        <dbReference type="Rhea" id="RHEA:13517"/>
        <dbReference type="ChEBI" id="CHEBI:30616"/>
        <dbReference type="ChEBI" id="CHEBI:58369"/>
        <dbReference type="ChEBI" id="CHEBI:63528"/>
        <dbReference type="ChEBI" id="CHEBI:456216"/>
        <dbReference type="EC" id="2.7.4.9"/>
    </reaction>
</comment>
<comment type="similarity">
    <text evidence="1">Belongs to the thymidylate kinase family.</text>
</comment>